<gene>
    <name evidence="1" type="primary">rplF</name>
    <name type="ordered locus">RL1789</name>
</gene>
<dbReference type="EMBL" id="AM236080">
    <property type="protein sequence ID" value="CAK07284.1"/>
    <property type="molecule type" value="Genomic_DNA"/>
</dbReference>
<dbReference type="RefSeq" id="WP_003547563.1">
    <property type="nucleotide sequence ID" value="NC_008380.1"/>
</dbReference>
<dbReference type="SMR" id="Q1MIC6"/>
<dbReference type="EnsemblBacteria" id="CAK07284">
    <property type="protein sequence ID" value="CAK07284"/>
    <property type="gene ID" value="RL1789"/>
</dbReference>
<dbReference type="GeneID" id="84669502"/>
<dbReference type="KEGG" id="rle:RL1789"/>
<dbReference type="eggNOG" id="COG0097">
    <property type="taxonomic scope" value="Bacteria"/>
</dbReference>
<dbReference type="HOGENOM" id="CLU_065464_1_2_5"/>
<dbReference type="Proteomes" id="UP000006575">
    <property type="component" value="Chromosome"/>
</dbReference>
<dbReference type="GO" id="GO:0022625">
    <property type="term" value="C:cytosolic large ribosomal subunit"/>
    <property type="evidence" value="ECO:0007669"/>
    <property type="project" value="TreeGrafter"/>
</dbReference>
<dbReference type="GO" id="GO:0019843">
    <property type="term" value="F:rRNA binding"/>
    <property type="evidence" value="ECO:0007669"/>
    <property type="project" value="UniProtKB-UniRule"/>
</dbReference>
<dbReference type="GO" id="GO:0003735">
    <property type="term" value="F:structural constituent of ribosome"/>
    <property type="evidence" value="ECO:0007669"/>
    <property type="project" value="InterPro"/>
</dbReference>
<dbReference type="GO" id="GO:0002181">
    <property type="term" value="P:cytoplasmic translation"/>
    <property type="evidence" value="ECO:0007669"/>
    <property type="project" value="TreeGrafter"/>
</dbReference>
<dbReference type="FunFam" id="3.90.930.12:FF:000001">
    <property type="entry name" value="50S ribosomal protein L6"/>
    <property type="match status" value="1"/>
</dbReference>
<dbReference type="Gene3D" id="3.90.930.12">
    <property type="entry name" value="Ribosomal protein L6, alpha-beta domain"/>
    <property type="match status" value="2"/>
</dbReference>
<dbReference type="HAMAP" id="MF_01365_B">
    <property type="entry name" value="Ribosomal_uL6_B"/>
    <property type="match status" value="1"/>
</dbReference>
<dbReference type="InterPro" id="IPR000702">
    <property type="entry name" value="Ribosomal_uL6-like"/>
</dbReference>
<dbReference type="InterPro" id="IPR036789">
    <property type="entry name" value="Ribosomal_uL6-like_a/b-dom_sf"/>
</dbReference>
<dbReference type="InterPro" id="IPR020040">
    <property type="entry name" value="Ribosomal_uL6_a/b-dom"/>
</dbReference>
<dbReference type="InterPro" id="IPR019906">
    <property type="entry name" value="Ribosomal_uL6_bac-type"/>
</dbReference>
<dbReference type="InterPro" id="IPR002358">
    <property type="entry name" value="Ribosomal_uL6_CS"/>
</dbReference>
<dbReference type="NCBIfam" id="TIGR03654">
    <property type="entry name" value="L6_bact"/>
    <property type="match status" value="1"/>
</dbReference>
<dbReference type="PANTHER" id="PTHR11655">
    <property type="entry name" value="60S/50S RIBOSOMAL PROTEIN L6/L9"/>
    <property type="match status" value="1"/>
</dbReference>
<dbReference type="PANTHER" id="PTHR11655:SF14">
    <property type="entry name" value="LARGE RIBOSOMAL SUBUNIT PROTEIN UL6M"/>
    <property type="match status" value="1"/>
</dbReference>
<dbReference type="Pfam" id="PF00347">
    <property type="entry name" value="Ribosomal_L6"/>
    <property type="match status" value="2"/>
</dbReference>
<dbReference type="PIRSF" id="PIRSF002162">
    <property type="entry name" value="Ribosomal_L6"/>
    <property type="match status" value="1"/>
</dbReference>
<dbReference type="PRINTS" id="PR00059">
    <property type="entry name" value="RIBOSOMALL6"/>
</dbReference>
<dbReference type="SUPFAM" id="SSF56053">
    <property type="entry name" value="Ribosomal protein L6"/>
    <property type="match status" value="2"/>
</dbReference>
<dbReference type="PROSITE" id="PS00525">
    <property type="entry name" value="RIBOSOMAL_L6_1"/>
    <property type="match status" value="1"/>
</dbReference>
<feature type="chain" id="PRO_0000265283" description="Large ribosomal subunit protein uL6">
    <location>
        <begin position="1"/>
        <end position="177"/>
    </location>
</feature>
<evidence type="ECO:0000255" key="1">
    <source>
        <dbReference type="HAMAP-Rule" id="MF_01365"/>
    </source>
</evidence>
<evidence type="ECO:0000305" key="2"/>
<name>RL6_RHIJ3</name>
<sequence length="177" mass="19335">MSRIGKKPVQVPAGITATVDGQKVTAKGPKGELFFVANDEISLKLENNAVVVTPVNQTKDARSKWGMSRTMIEGIFKGVKDGFERKLEINGVGYRAAMQGKNLQLALGFSHDVIYEPPVGISIVVPKPTEIVVSGINKQQVGQVAAEIREYRGPEPYKGKGVKYADERIVRKEGKKK</sequence>
<protein>
    <recommendedName>
        <fullName evidence="1">Large ribosomal subunit protein uL6</fullName>
    </recommendedName>
    <alternativeName>
        <fullName evidence="2">50S ribosomal protein L6</fullName>
    </alternativeName>
</protein>
<proteinExistence type="inferred from homology"/>
<keyword id="KW-0687">Ribonucleoprotein</keyword>
<keyword id="KW-0689">Ribosomal protein</keyword>
<keyword id="KW-0694">RNA-binding</keyword>
<keyword id="KW-0699">rRNA-binding</keyword>
<accession>Q1MIC6</accession>
<comment type="function">
    <text evidence="1">This protein binds to the 23S rRNA, and is important in its secondary structure. It is located near the subunit interface in the base of the L7/L12 stalk, and near the tRNA binding site of the peptidyltransferase center.</text>
</comment>
<comment type="subunit">
    <text evidence="1">Part of the 50S ribosomal subunit.</text>
</comment>
<comment type="similarity">
    <text evidence="1">Belongs to the universal ribosomal protein uL6 family.</text>
</comment>
<reference key="1">
    <citation type="journal article" date="2006" name="Genome Biol.">
        <title>The genome of Rhizobium leguminosarum has recognizable core and accessory components.</title>
        <authorList>
            <person name="Young J.P.W."/>
            <person name="Crossman L.C."/>
            <person name="Johnston A.W.B."/>
            <person name="Thomson N.R."/>
            <person name="Ghazoui Z.F."/>
            <person name="Hull K.H."/>
            <person name="Wexler M."/>
            <person name="Curson A.R.J."/>
            <person name="Todd J.D."/>
            <person name="Poole P.S."/>
            <person name="Mauchline T.H."/>
            <person name="East A.K."/>
            <person name="Quail M.A."/>
            <person name="Churcher C."/>
            <person name="Arrowsmith C."/>
            <person name="Cherevach I."/>
            <person name="Chillingworth T."/>
            <person name="Clarke K."/>
            <person name="Cronin A."/>
            <person name="Davis P."/>
            <person name="Fraser A."/>
            <person name="Hance Z."/>
            <person name="Hauser H."/>
            <person name="Jagels K."/>
            <person name="Moule S."/>
            <person name="Mungall K."/>
            <person name="Norbertczak H."/>
            <person name="Rabbinowitsch E."/>
            <person name="Sanders M."/>
            <person name="Simmonds M."/>
            <person name="Whitehead S."/>
            <person name="Parkhill J."/>
        </authorList>
    </citation>
    <scope>NUCLEOTIDE SEQUENCE [LARGE SCALE GENOMIC DNA]</scope>
    <source>
        <strain>DSM 114642 / LMG 32736 / 3841</strain>
    </source>
</reference>
<organism>
    <name type="scientific">Rhizobium johnstonii (strain DSM 114642 / LMG 32736 / 3841)</name>
    <name type="common">Rhizobium leguminosarum bv. viciae</name>
    <dbReference type="NCBI Taxonomy" id="216596"/>
    <lineage>
        <taxon>Bacteria</taxon>
        <taxon>Pseudomonadati</taxon>
        <taxon>Pseudomonadota</taxon>
        <taxon>Alphaproteobacteria</taxon>
        <taxon>Hyphomicrobiales</taxon>
        <taxon>Rhizobiaceae</taxon>
        <taxon>Rhizobium/Agrobacterium group</taxon>
        <taxon>Rhizobium</taxon>
        <taxon>Rhizobium johnstonii</taxon>
    </lineage>
</organism>